<comment type="function">
    <text evidence="1">Nucleotidase that shows phosphatase activity on nucleoside 5'-monophosphates.</text>
</comment>
<comment type="catalytic activity">
    <reaction evidence="1">
        <text>a ribonucleoside 5'-phosphate + H2O = a ribonucleoside + phosphate</text>
        <dbReference type="Rhea" id="RHEA:12484"/>
        <dbReference type="ChEBI" id="CHEBI:15377"/>
        <dbReference type="ChEBI" id="CHEBI:18254"/>
        <dbReference type="ChEBI" id="CHEBI:43474"/>
        <dbReference type="ChEBI" id="CHEBI:58043"/>
        <dbReference type="EC" id="3.1.3.5"/>
    </reaction>
</comment>
<comment type="cofactor">
    <cofactor evidence="1">
        <name>a divalent metal cation</name>
        <dbReference type="ChEBI" id="CHEBI:60240"/>
    </cofactor>
    <text evidence="1">Binds 1 divalent metal cation per subunit.</text>
</comment>
<comment type="subcellular location">
    <subcellularLocation>
        <location evidence="1">Cytoplasm</location>
    </subcellularLocation>
</comment>
<comment type="similarity">
    <text evidence="1">Belongs to the SurE nucleotidase family.</text>
</comment>
<protein>
    <recommendedName>
        <fullName evidence="1">5'-nucleotidase SurE</fullName>
        <ecNumber evidence="1">3.1.3.5</ecNumber>
    </recommendedName>
    <alternativeName>
        <fullName evidence="1">Nucleoside 5'-monophosphate phosphohydrolase</fullName>
    </alternativeName>
</protein>
<gene>
    <name evidence="1" type="primary">surE</name>
    <name type="ordered locus">Psyr_1371</name>
</gene>
<name>SURE_PSEU2</name>
<feature type="chain" id="PRO_0000235641" description="5'-nucleotidase SurE">
    <location>
        <begin position="1"/>
        <end position="249"/>
    </location>
</feature>
<feature type="binding site" evidence="1">
    <location>
        <position position="8"/>
    </location>
    <ligand>
        <name>a divalent metal cation</name>
        <dbReference type="ChEBI" id="CHEBI:60240"/>
    </ligand>
</feature>
<feature type="binding site" evidence="1">
    <location>
        <position position="9"/>
    </location>
    <ligand>
        <name>a divalent metal cation</name>
        <dbReference type="ChEBI" id="CHEBI:60240"/>
    </ligand>
</feature>
<feature type="binding site" evidence="1">
    <location>
        <position position="39"/>
    </location>
    <ligand>
        <name>a divalent metal cation</name>
        <dbReference type="ChEBI" id="CHEBI:60240"/>
    </ligand>
</feature>
<feature type="binding site" evidence="1">
    <location>
        <position position="91"/>
    </location>
    <ligand>
        <name>a divalent metal cation</name>
        <dbReference type="ChEBI" id="CHEBI:60240"/>
    </ligand>
</feature>
<keyword id="KW-0963">Cytoplasm</keyword>
<keyword id="KW-0378">Hydrolase</keyword>
<keyword id="KW-0479">Metal-binding</keyword>
<keyword id="KW-0547">Nucleotide-binding</keyword>
<evidence type="ECO:0000255" key="1">
    <source>
        <dbReference type="HAMAP-Rule" id="MF_00060"/>
    </source>
</evidence>
<accession>Q4ZWQ0</accession>
<sequence>MRILISNDDGVNAPGLVALHAALADYADCVVIAPDQDKSGASSSLTLDRPLHPHTLENGFISVNGTPTDCVHLGIHGLLERQPDMVVSGINLGANLGDDVLYSGTVAAALEGRFLQRPSFAFSFLSRQPDNLATAAHYARLLVEAHEQLDLPPRTVLNVNIPNLPLEHIRGIQLTRLGHRARAAAPIRVVDPRGRAGYWIAAAGDVEDGGAGTDFHAVVQGYVSITPLQLDRTCQDGFSSLNTWLEGLR</sequence>
<proteinExistence type="inferred from homology"/>
<organism>
    <name type="scientific">Pseudomonas syringae pv. syringae (strain B728a)</name>
    <dbReference type="NCBI Taxonomy" id="205918"/>
    <lineage>
        <taxon>Bacteria</taxon>
        <taxon>Pseudomonadati</taxon>
        <taxon>Pseudomonadota</taxon>
        <taxon>Gammaproteobacteria</taxon>
        <taxon>Pseudomonadales</taxon>
        <taxon>Pseudomonadaceae</taxon>
        <taxon>Pseudomonas</taxon>
        <taxon>Pseudomonas syringae</taxon>
    </lineage>
</organism>
<dbReference type="EC" id="3.1.3.5" evidence="1"/>
<dbReference type="EMBL" id="CP000075">
    <property type="protein sequence ID" value="AAY36422.1"/>
    <property type="molecule type" value="Genomic_DNA"/>
</dbReference>
<dbReference type="RefSeq" id="WP_004406214.1">
    <property type="nucleotide sequence ID" value="NC_007005.1"/>
</dbReference>
<dbReference type="RefSeq" id="YP_234460.1">
    <property type="nucleotide sequence ID" value="NC_007005.1"/>
</dbReference>
<dbReference type="SMR" id="Q4ZWQ0"/>
<dbReference type="STRING" id="205918.Psyr_1371"/>
<dbReference type="KEGG" id="psb:Psyr_1371"/>
<dbReference type="PATRIC" id="fig|205918.7.peg.1404"/>
<dbReference type="eggNOG" id="COG0496">
    <property type="taxonomic scope" value="Bacteria"/>
</dbReference>
<dbReference type="HOGENOM" id="CLU_045192_1_2_6"/>
<dbReference type="OrthoDB" id="9780815at2"/>
<dbReference type="Proteomes" id="UP000000426">
    <property type="component" value="Chromosome"/>
</dbReference>
<dbReference type="GO" id="GO:0005737">
    <property type="term" value="C:cytoplasm"/>
    <property type="evidence" value="ECO:0007669"/>
    <property type="project" value="UniProtKB-SubCell"/>
</dbReference>
<dbReference type="GO" id="GO:0008254">
    <property type="term" value="F:3'-nucleotidase activity"/>
    <property type="evidence" value="ECO:0007669"/>
    <property type="project" value="TreeGrafter"/>
</dbReference>
<dbReference type="GO" id="GO:0008253">
    <property type="term" value="F:5'-nucleotidase activity"/>
    <property type="evidence" value="ECO:0007669"/>
    <property type="project" value="UniProtKB-UniRule"/>
</dbReference>
<dbReference type="GO" id="GO:0004309">
    <property type="term" value="F:exopolyphosphatase activity"/>
    <property type="evidence" value="ECO:0007669"/>
    <property type="project" value="TreeGrafter"/>
</dbReference>
<dbReference type="GO" id="GO:0046872">
    <property type="term" value="F:metal ion binding"/>
    <property type="evidence" value="ECO:0007669"/>
    <property type="project" value="UniProtKB-UniRule"/>
</dbReference>
<dbReference type="GO" id="GO:0000166">
    <property type="term" value="F:nucleotide binding"/>
    <property type="evidence" value="ECO:0007669"/>
    <property type="project" value="UniProtKB-KW"/>
</dbReference>
<dbReference type="FunFam" id="3.40.1210.10:FF:000001">
    <property type="entry name" value="5'/3'-nucleotidase SurE"/>
    <property type="match status" value="1"/>
</dbReference>
<dbReference type="Gene3D" id="3.40.1210.10">
    <property type="entry name" value="Survival protein SurE-like phosphatase/nucleotidase"/>
    <property type="match status" value="1"/>
</dbReference>
<dbReference type="HAMAP" id="MF_00060">
    <property type="entry name" value="SurE"/>
    <property type="match status" value="1"/>
</dbReference>
<dbReference type="InterPro" id="IPR030048">
    <property type="entry name" value="SurE"/>
</dbReference>
<dbReference type="InterPro" id="IPR002828">
    <property type="entry name" value="SurE-like_Pase/nucleotidase"/>
</dbReference>
<dbReference type="InterPro" id="IPR036523">
    <property type="entry name" value="SurE-like_sf"/>
</dbReference>
<dbReference type="NCBIfam" id="NF001489">
    <property type="entry name" value="PRK00346.1-3"/>
    <property type="match status" value="1"/>
</dbReference>
<dbReference type="NCBIfam" id="NF001490">
    <property type="entry name" value="PRK00346.1-4"/>
    <property type="match status" value="1"/>
</dbReference>
<dbReference type="NCBIfam" id="TIGR00087">
    <property type="entry name" value="surE"/>
    <property type="match status" value="1"/>
</dbReference>
<dbReference type="PANTHER" id="PTHR30457">
    <property type="entry name" value="5'-NUCLEOTIDASE SURE"/>
    <property type="match status" value="1"/>
</dbReference>
<dbReference type="PANTHER" id="PTHR30457:SF12">
    <property type="entry name" value="5'_3'-NUCLEOTIDASE SURE"/>
    <property type="match status" value="1"/>
</dbReference>
<dbReference type="Pfam" id="PF01975">
    <property type="entry name" value="SurE"/>
    <property type="match status" value="1"/>
</dbReference>
<dbReference type="SUPFAM" id="SSF64167">
    <property type="entry name" value="SurE-like"/>
    <property type="match status" value="1"/>
</dbReference>
<reference key="1">
    <citation type="journal article" date="2005" name="Proc. Natl. Acad. Sci. U.S.A.">
        <title>Comparison of the complete genome sequences of Pseudomonas syringae pv. syringae B728a and pv. tomato DC3000.</title>
        <authorList>
            <person name="Feil H."/>
            <person name="Feil W.S."/>
            <person name="Chain P."/>
            <person name="Larimer F."/>
            <person name="Dibartolo G."/>
            <person name="Copeland A."/>
            <person name="Lykidis A."/>
            <person name="Trong S."/>
            <person name="Nolan M."/>
            <person name="Goltsman E."/>
            <person name="Thiel J."/>
            <person name="Malfatti S."/>
            <person name="Loper J.E."/>
            <person name="Lapidus A."/>
            <person name="Detter J.C."/>
            <person name="Land M."/>
            <person name="Richardson P.M."/>
            <person name="Kyrpides N.C."/>
            <person name="Ivanova N."/>
            <person name="Lindow S.E."/>
        </authorList>
    </citation>
    <scope>NUCLEOTIDE SEQUENCE [LARGE SCALE GENOMIC DNA]</scope>
    <source>
        <strain>B728a</strain>
    </source>
</reference>